<reference key="1">
    <citation type="submission" date="2002-01" db="EMBL/GenBank/DDBJ databases">
        <title>Cloning and expression of guanylin and uroguanylin in the Spinifex hopping mouse, Notomys alexis.</title>
        <authorList>
            <person name="Donald J.A."/>
            <person name="Bartolo R.C."/>
        </authorList>
    </citation>
    <scope>NUCLEOTIDE SEQUENCE [MRNA]</scope>
</reference>
<protein>
    <recommendedName>
        <fullName>Guanylate cyclase activator 2B</fullName>
    </recommendedName>
    <component>
        <recommendedName>
            <fullName>Uroguanylin</fullName>
            <shortName>UGN</shortName>
        </recommendedName>
    </component>
</protein>
<sequence>MSGSQLWAAVVVLLLLQSAQGVYIKYHGFQVQLESVKKLSELEEKQMSSPQLRKSGLLLPDVCHNPALPLDLQPICASQEAASTFKALRTIATDECELCINVACTGC</sequence>
<organism>
    <name type="scientific">Notomys alexis</name>
    <name type="common">Spinifex hopping mouse</name>
    <dbReference type="NCBI Taxonomy" id="184396"/>
    <lineage>
        <taxon>Eukaryota</taxon>
        <taxon>Metazoa</taxon>
        <taxon>Chordata</taxon>
        <taxon>Craniata</taxon>
        <taxon>Vertebrata</taxon>
        <taxon>Euteleostomi</taxon>
        <taxon>Mammalia</taxon>
        <taxon>Eutheria</taxon>
        <taxon>Euarchontoglires</taxon>
        <taxon>Glires</taxon>
        <taxon>Rodentia</taxon>
        <taxon>Myomorpha</taxon>
        <taxon>Muroidea</taxon>
        <taxon>Muridae</taxon>
        <taxon>Murinae</taxon>
        <taxon>Notomys</taxon>
    </lineage>
</organism>
<feature type="signal peptide" evidence="2">
    <location>
        <begin position="1"/>
        <end position="21"/>
    </location>
</feature>
<feature type="propeptide" id="PRO_0000256706" evidence="1">
    <location>
        <begin position="22"/>
        <end position="92"/>
    </location>
</feature>
<feature type="peptide" id="PRO_0000256707" description="Uroguanylin">
    <location>
        <begin position="93"/>
        <end position="107"/>
    </location>
</feature>
<feature type="disulfide bond" evidence="1">
    <location>
        <begin position="63"/>
        <end position="76"/>
    </location>
</feature>
<feature type="disulfide bond" evidence="1">
    <location>
        <begin position="96"/>
        <end position="104"/>
    </location>
</feature>
<feature type="disulfide bond" evidence="1">
    <location>
        <begin position="99"/>
        <end position="107"/>
    </location>
</feature>
<dbReference type="EMBL" id="AF469496">
    <property type="protein sequence ID" value="AAL77417.1"/>
    <property type="molecule type" value="mRNA"/>
</dbReference>
<dbReference type="SMR" id="Q8R5G8"/>
<dbReference type="GO" id="GO:0005576">
    <property type="term" value="C:extracellular region"/>
    <property type="evidence" value="ECO:0007669"/>
    <property type="project" value="UniProtKB-SubCell"/>
</dbReference>
<dbReference type="GO" id="GO:0030250">
    <property type="term" value="F:guanylate cyclase activator activity"/>
    <property type="evidence" value="ECO:0007669"/>
    <property type="project" value="InterPro"/>
</dbReference>
<dbReference type="FunFam" id="3.90.1450.10:FF:000001">
    <property type="entry name" value="Guanylate cyclase activator 2B"/>
    <property type="match status" value="1"/>
</dbReference>
<dbReference type="Gene3D" id="3.90.1450.10">
    <property type="entry name" value="Guanylin"/>
    <property type="match status" value="1"/>
</dbReference>
<dbReference type="InterPro" id="IPR000879">
    <property type="entry name" value="Guanylin"/>
</dbReference>
<dbReference type="InterPro" id="IPR036382">
    <property type="entry name" value="Guanylin_sf"/>
</dbReference>
<dbReference type="PANTHER" id="PTHR11318:SF4">
    <property type="entry name" value="GUANYLATE CYCLASE ACTIVATOR 2B"/>
    <property type="match status" value="1"/>
</dbReference>
<dbReference type="PANTHER" id="PTHR11318">
    <property type="entry name" value="GUANYLIN FAMILY MEMBER"/>
    <property type="match status" value="1"/>
</dbReference>
<dbReference type="Pfam" id="PF02058">
    <property type="entry name" value="Guanylin"/>
    <property type="match status" value="1"/>
</dbReference>
<dbReference type="PIRSF" id="PIRSF001849">
    <property type="entry name" value="Guanylin"/>
    <property type="match status" value="1"/>
</dbReference>
<dbReference type="PRINTS" id="PR00774">
    <property type="entry name" value="GUANYLIN"/>
</dbReference>
<dbReference type="SUPFAM" id="SSF89890">
    <property type="entry name" value="Proguanylin"/>
    <property type="match status" value="1"/>
</dbReference>
<accession>Q8R5G8</accession>
<evidence type="ECO:0000250" key="1"/>
<evidence type="ECO:0000255" key="2"/>
<evidence type="ECO:0000305" key="3"/>
<proteinExistence type="inferred from homology"/>
<keyword id="KW-1015">Disulfide bond</keyword>
<keyword id="KW-0964">Secreted</keyword>
<keyword id="KW-0732">Signal</keyword>
<gene>
    <name type="primary">GUCA2B</name>
</gene>
<comment type="function">
    <text evidence="1">Endogenous activator of intestinal guanylate cyclase. It stimulates this enzyme through the same receptor binding region as the heat-stable enterotoxins. May be a potent physiological regulator of intestinal fluid and electrolyte transport. May be an autocrine/paracrine regulator of intestinal salt and water transport (By similarity).</text>
</comment>
<comment type="subcellular location">
    <subcellularLocation>
        <location evidence="1">Secreted</location>
    </subcellularLocation>
</comment>
<comment type="similarity">
    <text evidence="3">Belongs to the guanylin family.</text>
</comment>
<name>GUC2B_NOTAL</name>